<name>S5A1_HUMAN</name>
<accession>P18405</accession>
<accession>B2R7Q1</accession>
<accession>Q9UHY4</accession>
<accession>Q9UP36</accession>
<accession>Q9UP37</accession>
<organism>
    <name type="scientific">Homo sapiens</name>
    <name type="common">Human</name>
    <dbReference type="NCBI Taxonomy" id="9606"/>
    <lineage>
        <taxon>Eukaryota</taxon>
        <taxon>Metazoa</taxon>
        <taxon>Chordata</taxon>
        <taxon>Craniata</taxon>
        <taxon>Vertebrata</taxon>
        <taxon>Euteleostomi</taxon>
        <taxon>Mammalia</taxon>
        <taxon>Eutheria</taxon>
        <taxon>Euarchontoglires</taxon>
        <taxon>Primates</taxon>
        <taxon>Haplorrhini</taxon>
        <taxon>Catarrhini</taxon>
        <taxon>Hominidae</taxon>
        <taxon>Homo</taxon>
    </lineage>
</organism>
<proteinExistence type="evidence at protein level"/>
<comment type="function">
    <text evidence="2">Converts testosterone into 5-alpha-dihydrotestosterone and progesterone or corticosterone into their corresponding 5-alpha-3-oxosteroids. It plays a central role in sexual differentiation and androgen physiology.</text>
</comment>
<comment type="catalytic activity">
    <reaction evidence="2">
        <text>a 3-oxo-5alpha-steroid + NADP(+) = a 3-oxo-Delta(4)-steroid + NADPH + H(+)</text>
        <dbReference type="Rhea" id="RHEA:54384"/>
        <dbReference type="ChEBI" id="CHEBI:13601"/>
        <dbReference type="ChEBI" id="CHEBI:15378"/>
        <dbReference type="ChEBI" id="CHEBI:47909"/>
        <dbReference type="ChEBI" id="CHEBI:57783"/>
        <dbReference type="ChEBI" id="CHEBI:58349"/>
        <dbReference type="EC" id="1.3.1.22"/>
    </reaction>
</comment>
<comment type="catalytic activity">
    <reaction evidence="2">
        <text>androst-4-ene-3,17-dione + NADPH + H(+) = 5alpha-androstan-3,17-dione + NADP(+)</text>
        <dbReference type="Rhea" id="RHEA:50816"/>
        <dbReference type="ChEBI" id="CHEBI:15378"/>
        <dbReference type="ChEBI" id="CHEBI:15994"/>
        <dbReference type="ChEBI" id="CHEBI:16422"/>
        <dbReference type="ChEBI" id="CHEBI:57783"/>
        <dbReference type="ChEBI" id="CHEBI:58349"/>
    </reaction>
    <physiologicalReaction direction="left-to-right" evidence="4">
        <dbReference type="Rhea" id="RHEA:50817"/>
    </physiologicalReaction>
</comment>
<comment type="catalytic activity">
    <reaction evidence="2">
        <text>5alpha-pregnane-3,20-dione + NADP(+) = progesterone + NADPH + H(+)</text>
        <dbReference type="Rhea" id="RHEA:21952"/>
        <dbReference type="ChEBI" id="CHEBI:15378"/>
        <dbReference type="ChEBI" id="CHEBI:17026"/>
        <dbReference type="ChEBI" id="CHEBI:28952"/>
        <dbReference type="ChEBI" id="CHEBI:57783"/>
        <dbReference type="ChEBI" id="CHEBI:58349"/>
        <dbReference type="EC" id="1.3.1.22"/>
    </reaction>
    <physiologicalReaction direction="right-to-left" evidence="4">
        <dbReference type="Rhea" id="RHEA:21954"/>
    </physiologicalReaction>
</comment>
<comment type="catalytic activity">
    <reaction evidence="2">
        <text>17beta-hydroxy-5alpha-androstan-3-one + NADP(+) = testosterone + NADPH + H(+)</text>
        <dbReference type="Rhea" id="RHEA:50820"/>
        <dbReference type="ChEBI" id="CHEBI:15378"/>
        <dbReference type="ChEBI" id="CHEBI:16330"/>
        <dbReference type="ChEBI" id="CHEBI:17347"/>
        <dbReference type="ChEBI" id="CHEBI:57783"/>
        <dbReference type="ChEBI" id="CHEBI:58349"/>
        <dbReference type="EC" id="1.3.1.22"/>
    </reaction>
    <physiologicalReaction direction="right-to-left" evidence="4">
        <dbReference type="Rhea" id="RHEA:50822"/>
    </physiologicalReaction>
</comment>
<comment type="biophysicochemical properties">
    <kinetics>
        <KM evidence="2">3.6 uM for testosterone</KM>
        <KM evidence="2">1.7 uM for androstenedione</KM>
        <KM evidence="2">0.8 uM for progesterone</KM>
        <Vmax evidence="2">3.6 nmol/min/mg enzyme toward testosterone</Vmax>
        <Vmax evidence="2">5.3 nmol/min/mg enzyme toward androstenedione</Vmax>
        <Vmax evidence="2">5.0 nmol/min/mg enzyme toward progesterone</Vmax>
    </kinetics>
    <phDependence>
        <text>Optimally active at alkaline pHs.</text>
    </phDependence>
</comment>
<comment type="interaction">
    <interactant intactId="EBI-21889552">
        <id>P18405</id>
    </interactant>
    <interactant intactId="EBI-1773495">
        <id>Q562R1</id>
        <label>ACTBL2</label>
    </interactant>
    <organismsDiffer>false</organismsDiffer>
    <experiments>2</experiments>
</comment>
<comment type="subcellular location">
    <subcellularLocation>
        <location>Microsome membrane</location>
        <topology>Multi-pass membrane protein</topology>
    </subcellularLocation>
    <subcellularLocation>
        <location evidence="3">Endoplasmic reticulum membrane</location>
        <topology evidence="3">Multi-pass membrane protein</topology>
    </subcellularLocation>
</comment>
<comment type="tissue specificity">
    <text>Liver and prostate (at a low level).</text>
</comment>
<comment type="induction">
    <text>Its expression is regulated by androgens such as testosterone.</text>
</comment>
<comment type="similarity">
    <text evidence="3">Belongs to the steroid 5-alpha reductase family.</text>
</comment>
<comment type="online information" name="Wikipedia">
    <link uri="https://en.wikipedia.org/wiki/5_alpha_reductase"/>
    <text>5-alpha reductase entry</text>
</comment>
<reference key="1">
    <citation type="journal article" date="1990" name="Proc. Natl. Acad. Sci. U.S.A.">
        <title>Structural and biochemical properties of cloned and expressed human and rat steroid 5 alpha-reductases.</title>
        <authorList>
            <person name="Andersson S."/>
            <person name="Russell D.W."/>
        </authorList>
    </citation>
    <scope>NUCLEOTIDE SEQUENCE [MRNA]</scope>
    <scope>CATALYTIC ACTIVITY</scope>
    <scope>FUNCTION</scope>
    <scope>BIOPHYSICOCHEMICAL PROPERTIES</scope>
</reference>
<reference key="2">
    <citation type="journal article" date="1991" name="Genomics">
        <title>Characterization and chromosomal mapping of a human steroid 5 alpha-reductase gene and pseudogene and mapping of the mouse homologue.</title>
        <authorList>
            <person name="Jenkins E.P."/>
            <person name="Hsieh C.L."/>
            <person name="Milatovich A."/>
            <person name="Normington K."/>
            <person name="Berman D.M."/>
            <person name="Francke U."/>
            <person name="Russell D.W."/>
        </authorList>
    </citation>
    <scope>NUCLEOTIDE SEQUENCE [GENOMIC DNA]</scope>
</reference>
<reference key="3">
    <citation type="submission" date="1998-03" db="EMBL/GenBank/DDBJ databases">
        <authorList>
            <person name="Yu W."/>
            <person name="Sarginson J."/>
            <person name="Gibbs R.A."/>
        </authorList>
    </citation>
    <scope>NUCLEOTIDE SEQUENCE [LARGE SCALE MRNA]</scope>
    <source>
        <tissue>Brain</tissue>
    </source>
</reference>
<reference key="4">
    <citation type="journal article" date="2000" name="Proc. Natl. Acad. Sci. U.S.A.">
        <title>Gene expression profiling in the human hypothalamus-pituitary-adrenal axis and full-length cDNA cloning.</title>
        <authorList>
            <person name="Hu R.-M."/>
            <person name="Han Z.-G."/>
            <person name="Song H.-D."/>
            <person name="Peng Y.-D."/>
            <person name="Huang Q.-H."/>
            <person name="Ren S.-X."/>
            <person name="Gu Y.-J."/>
            <person name="Huang C.-H."/>
            <person name="Li Y.-B."/>
            <person name="Jiang C.-L."/>
            <person name="Fu G."/>
            <person name="Zhang Q.-H."/>
            <person name="Gu B.-W."/>
            <person name="Dai M."/>
            <person name="Mao Y.-F."/>
            <person name="Gao G.-F."/>
            <person name="Rong R."/>
            <person name="Ye M."/>
            <person name="Zhou J."/>
            <person name="Xu S.-H."/>
            <person name="Gu J."/>
            <person name="Shi J.-X."/>
            <person name="Jin W.-R."/>
            <person name="Zhang C.-K."/>
            <person name="Wu T.-M."/>
            <person name="Huang G.-Y."/>
            <person name="Chen Z."/>
            <person name="Chen M.-D."/>
            <person name="Chen J.-L."/>
        </authorList>
    </citation>
    <scope>NUCLEOTIDE SEQUENCE [LARGE SCALE MRNA]</scope>
    <source>
        <tissue>Adrenal gland</tissue>
    </source>
</reference>
<reference key="5">
    <citation type="submission" date="2003-05" db="EMBL/GenBank/DDBJ databases">
        <title>Cloning of human full-length CDSs in BD Creator(TM) system donor vector.</title>
        <authorList>
            <person name="Kalnine N."/>
            <person name="Chen X."/>
            <person name="Rolfs A."/>
            <person name="Halleck A."/>
            <person name="Hines L."/>
            <person name="Eisenstein S."/>
            <person name="Koundinya M."/>
            <person name="Raphael J."/>
            <person name="Moreira D."/>
            <person name="Kelley T."/>
            <person name="LaBaer J."/>
            <person name="Lin Y."/>
            <person name="Phelan M."/>
            <person name="Farmer A."/>
        </authorList>
    </citation>
    <scope>NUCLEOTIDE SEQUENCE [LARGE SCALE MRNA]</scope>
</reference>
<reference key="6">
    <citation type="submission" date="2003-07" db="EMBL/GenBank/DDBJ databases">
        <authorList>
            <consortium name="NIEHS SNPs program"/>
        </authorList>
    </citation>
    <scope>NUCLEOTIDE SEQUENCE [GENOMIC DNA]</scope>
</reference>
<reference key="7">
    <citation type="journal article" date="2004" name="Nat. Genet.">
        <title>Complete sequencing and characterization of 21,243 full-length human cDNAs.</title>
        <authorList>
            <person name="Ota T."/>
            <person name="Suzuki Y."/>
            <person name="Nishikawa T."/>
            <person name="Otsuki T."/>
            <person name="Sugiyama T."/>
            <person name="Irie R."/>
            <person name="Wakamatsu A."/>
            <person name="Hayashi K."/>
            <person name="Sato H."/>
            <person name="Nagai K."/>
            <person name="Kimura K."/>
            <person name="Makita H."/>
            <person name="Sekine M."/>
            <person name="Obayashi M."/>
            <person name="Nishi T."/>
            <person name="Shibahara T."/>
            <person name="Tanaka T."/>
            <person name="Ishii S."/>
            <person name="Yamamoto J."/>
            <person name="Saito K."/>
            <person name="Kawai Y."/>
            <person name="Isono Y."/>
            <person name="Nakamura Y."/>
            <person name="Nagahari K."/>
            <person name="Murakami K."/>
            <person name="Yasuda T."/>
            <person name="Iwayanagi T."/>
            <person name="Wagatsuma M."/>
            <person name="Shiratori A."/>
            <person name="Sudo H."/>
            <person name="Hosoiri T."/>
            <person name="Kaku Y."/>
            <person name="Kodaira H."/>
            <person name="Kondo H."/>
            <person name="Sugawara M."/>
            <person name="Takahashi M."/>
            <person name="Kanda K."/>
            <person name="Yokoi T."/>
            <person name="Furuya T."/>
            <person name="Kikkawa E."/>
            <person name="Omura Y."/>
            <person name="Abe K."/>
            <person name="Kamihara K."/>
            <person name="Katsuta N."/>
            <person name="Sato K."/>
            <person name="Tanikawa M."/>
            <person name="Yamazaki M."/>
            <person name="Ninomiya K."/>
            <person name="Ishibashi T."/>
            <person name="Yamashita H."/>
            <person name="Murakawa K."/>
            <person name="Fujimori K."/>
            <person name="Tanai H."/>
            <person name="Kimata M."/>
            <person name="Watanabe M."/>
            <person name="Hiraoka S."/>
            <person name="Chiba Y."/>
            <person name="Ishida S."/>
            <person name="Ono Y."/>
            <person name="Takiguchi S."/>
            <person name="Watanabe S."/>
            <person name="Yosida M."/>
            <person name="Hotuta T."/>
            <person name="Kusano J."/>
            <person name="Kanehori K."/>
            <person name="Takahashi-Fujii A."/>
            <person name="Hara H."/>
            <person name="Tanase T.-O."/>
            <person name="Nomura Y."/>
            <person name="Togiya S."/>
            <person name="Komai F."/>
            <person name="Hara R."/>
            <person name="Takeuchi K."/>
            <person name="Arita M."/>
            <person name="Imose N."/>
            <person name="Musashino K."/>
            <person name="Yuuki H."/>
            <person name="Oshima A."/>
            <person name="Sasaki N."/>
            <person name="Aotsuka S."/>
            <person name="Yoshikawa Y."/>
            <person name="Matsunawa H."/>
            <person name="Ichihara T."/>
            <person name="Shiohata N."/>
            <person name="Sano S."/>
            <person name="Moriya S."/>
            <person name="Momiyama H."/>
            <person name="Satoh N."/>
            <person name="Takami S."/>
            <person name="Terashima Y."/>
            <person name="Suzuki O."/>
            <person name="Nakagawa S."/>
            <person name="Senoh A."/>
            <person name="Mizoguchi H."/>
            <person name="Goto Y."/>
            <person name="Shimizu F."/>
            <person name="Wakebe H."/>
            <person name="Hishigaki H."/>
            <person name="Watanabe T."/>
            <person name="Sugiyama A."/>
            <person name="Takemoto M."/>
            <person name="Kawakami B."/>
            <person name="Yamazaki M."/>
            <person name="Watanabe K."/>
            <person name="Kumagai A."/>
            <person name="Itakura S."/>
            <person name="Fukuzumi Y."/>
            <person name="Fujimori Y."/>
            <person name="Komiyama M."/>
            <person name="Tashiro H."/>
            <person name="Tanigami A."/>
            <person name="Fujiwara T."/>
            <person name="Ono T."/>
            <person name="Yamada K."/>
            <person name="Fujii Y."/>
            <person name="Ozaki K."/>
            <person name="Hirao M."/>
            <person name="Ohmori Y."/>
            <person name="Kawabata A."/>
            <person name="Hikiji T."/>
            <person name="Kobatake N."/>
            <person name="Inagaki H."/>
            <person name="Ikema Y."/>
            <person name="Okamoto S."/>
            <person name="Okitani R."/>
            <person name="Kawakami T."/>
            <person name="Noguchi S."/>
            <person name="Itoh T."/>
            <person name="Shigeta K."/>
            <person name="Senba T."/>
            <person name="Matsumura K."/>
            <person name="Nakajima Y."/>
            <person name="Mizuno T."/>
            <person name="Morinaga M."/>
            <person name="Sasaki M."/>
            <person name="Togashi T."/>
            <person name="Oyama M."/>
            <person name="Hata H."/>
            <person name="Watanabe M."/>
            <person name="Komatsu T."/>
            <person name="Mizushima-Sugano J."/>
            <person name="Satoh T."/>
            <person name="Shirai Y."/>
            <person name="Takahashi Y."/>
            <person name="Nakagawa K."/>
            <person name="Okumura K."/>
            <person name="Nagase T."/>
            <person name="Nomura N."/>
            <person name="Kikuchi H."/>
            <person name="Masuho Y."/>
            <person name="Yamashita R."/>
            <person name="Nakai K."/>
            <person name="Yada T."/>
            <person name="Nakamura Y."/>
            <person name="Ohara O."/>
            <person name="Isogai T."/>
            <person name="Sugano S."/>
        </authorList>
    </citation>
    <scope>NUCLEOTIDE SEQUENCE [LARGE SCALE MRNA]</scope>
    <source>
        <tissue>Hippocampus</tissue>
    </source>
</reference>
<reference key="8">
    <citation type="submission" date="2005-09" db="EMBL/GenBank/DDBJ databases">
        <authorList>
            <person name="Mural R.J."/>
            <person name="Istrail S."/>
            <person name="Sutton G.G."/>
            <person name="Florea L."/>
            <person name="Halpern A.L."/>
            <person name="Mobarry C.M."/>
            <person name="Lippert R."/>
            <person name="Walenz B."/>
            <person name="Shatkay H."/>
            <person name="Dew I."/>
            <person name="Miller J.R."/>
            <person name="Flanigan M.J."/>
            <person name="Edwards N.J."/>
            <person name="Bolanos R."/>
            <person name="Fasulo D."/>
            <person name="Halldorsson B.V."/>
            <person name="Hannenhalli S."/>
            <person name="Turner R."/>
            <person name="Yooseph S."/>
            <person name="Lu F."/>
            <person name="Nusskern D.R."/>
            <person name="Shue B.C."/>
            <person name="Zheng X.H."/>
            <person name="Zhong F."/>
            <person name="Delcher A.L."/>
            <person name="Huson D.H."/>
            <person name="Kravitz S.A."/>
            <person name="Mouchard L."/>
            <person name="Reinert K."/>
            <person name="Remington K.A."/>
            <person name="Clark A.G."/>
            <person name="Waterman M.S."/>
            <person name="Eichler E.E."/>
            <person name="Adams M.D."/>
            <person name="Hunkapiller M.W."/>
            <person name="Myers E.W."/>
            <person name="Venter J.C."/>
        </authorList>
    </citation>
    <scope>NUCLEOTIDE SEQUENCE [LARGE SCALE GENOMIC DNA]</scope>
</reference>
<reference key="9">
    <citation type="journal article" date="2004" name="Genome Res.">
        <title>The status, quality, and expansion of the NIH full-length cDNA project: the Mammalian Gene Collection (MGC).</title>
        <authorList>
            <consortium name="The MGC Project Team"/>
        </authorList>
    </citation>
    <scope>NUCLEOTIDE SEQUENCE [LARGE SCALE MRNA]</scope>
    <source>
        <tissue>Eye</tissue>
        <tissue>Urinary bladder</tissue>
    </source>
</reference>
<reference key="10">
    <citation type="journal article" date="2001" name="Pflugers Arch.">
        <title>New steroid 5alpha-reductase type I (SRD5A1) homologous sequences on human chromosomes 6 and 8.</title>
        <authorList>
            <person name="Eminovic I."/>
            <person name="Liovic M."/>
            <person name="Prezelj J."/>
            <person name="Kocijancic A."/>
            <person name="Rozman D."/>
            <person name="Komel R."/>
        </authorList>
    </citation>
    <scope>NUCLEOTIDE SEQUENCE [GENOMIC DNA] OF 1-98 AND 155-187</scope>
</reference>
<reference key="11">
    <citation type="journal article" date="2012" name="Proc. Natl. Acad. Sci. U.S.A.">
        <title>N-terminal acetylome analyses and functional insights of the N-terminal acetyltransferase NatB.</title>
        <authorList>
            <person name="Van Damme P."/>
            <person name="Lasa M."/>
            <person name="Polevoda B."/>
            <person name="Gazquez C."/>
            <person name="Elosegui-Artola A."/>
            <person name="Kim D.S."/>
            <person name="De Juan-Pardo E."/>
            <person name="Demeyer K."/>
            <person name="Hole K."/>
            <person name="Larrea E."/>
            <person name="Timmerman E."/>
            <person name="Prieto J."/>
            <person name="Arnesen T."/>
            <person name="Sherman F."/>
            <person name="Gevaert K."/>
            <person name="Aldabe R."/>
        </authorList>
    </citation>
    <scope>IDENTIFICATION BY MASS SPECTROMETRY [LARGE SCALE ANALYSIS]</scope>
</reference>
<evidence type="ECO:0000255" key="1"/>
<evidence type="ECO:0000269" key="2">
    <source>
    </source>
</evidence>
<evidence type="ECO:0000305" key="3"/>
<evidence type="ECO:0000305" key="4">
    <source>
    </source>
</evidence>
<evidence type="ECO:0000312" key="5">
    <source>
        <dbReference type="HGNC" id="HGNC:11284"/>
    </source>
</evidence>
<gene>
    <name evidence="5" type="primary">SRD5A1</name>
</gene>
<sequence length="259" mass="29459">MATATGVAEERLLAALAYLQCAVGCAVFARNRQTNSVYGRHALPSHRLRVPARAAWVVQELPSLALPLYQYASESAPRLRSAPNCILLAMFLVHYGHRCLIYPFLMRGGKPMPLLACTMAIMFCTCNGYLQSRYLSHCAVYADDWVTDPRFLIGFGLWLTGMLINIHSDHILRNLRKPGDTGYKIPRGGLFEYVTAANYFGEIMEWCGYALASWSVQGAAFAFFTFCFLSGRAKEHHEWYLRKFEEYPKFRKIIIPFLF</sequence>
<protein>
    <recommendedName>
        <fullName>3-oxo-5-alpha-steroid 4-dehydrogenase 1</fullName>
        <ecNumber evidence="2">1.3.1.22</ecNumber>
    </recommendedName>
    <alternativeName>
        <fullName>SR type 1</fullName>
    </alternativeName>
    <alternativeName>
        <fullName>Steroid 5-alpha-reductase 1</fullName>
        <shortName>S5AR 1</shortName>
    </alternativeName>
</protein>
<feature type="chain" id="PRO_0000213674" description="3-oxo-5-alpha-steroid 4-dehydrogenase 1">
    <location>
        <begin position="1"/>
        <end position="259"/>
    </location>
</feature>
<feature type="transmembrane region" description="Helical" evidence="1">
    <location>
        <begin position="12"/>
        <end position="29"/>
    </location>
</feature>
<feature type="transmembrane region" description="Helical" evidence="1">
    <location>
        <begin position="86"/>
        <end position="106"/>
    </location>
</feature>
<feature type="transmembrane region" description="Helical" evidence="1">
    <location>
        <begin position="111"/>
        <end position="131"/>
    </location>
</feature>
<feature type="transmembrane region" description="Helical" evidence="1">
    <location>
        <begin position="151"/>
        <end position="171"/>
    </location>
</feature>
<feature type="transmembrane region" description="Helical" evidence="1">
    <location>
        <begin position="209"/>
        <end position="229"/>
    </location>
</feature>
<feature type="sequence conflict" description="In Ref. 4; AAF14869." evidence="3" ref="4">
    <location>
        <begin position="29"/>
        <end position="76"/>
    </location>
</feature>
<keyword id="KW-0221">Differentiation</keyword>
<keyword id="KW-0256">Endoplasmic reticulum</keyword>
<keyword id="KW-0443">Lipid metabolism</keyword>
<keyword id="KW-0472">Membrane</keyword>
<keyword id="KW-0492">Microsome</keyword>
<keyword id="KW-0521">NADP</keyword>
<keyword id="KW-0560">Oxidoreductase</keyword>
<keyword id="KW-1267">Proteomics identification</keyword>
<keyword id="KW-1185">Reference proteome</keyword>
<keyword id="KW-0726">Sexual differentiation</keyword>
<keyword id="KW-0812">Transmembrane</keyword>
<keyword id="KW-1133">Transmembrane helix</keyword>
<dbReference type="EC" id="1.3.1.22" evidence="2"/>
<dbReference type="EMBL" id="M32313">
    <property type="protein sequence ID" value="AAA35490.1"/>
    <property type="molecule type" value="mRNA"/>
</dbReference>
<dbReference type="EMBL" id="M68886">
    <property type="protein sequence ID" value="AAA60995.1"/>
    <property type="molecule type" value="Genomic_DNA"/>
</dbReference>
<dbReference type="EMBL" id="M68882">
    <property type="protein sequence ID" value="AAA60995.1"/>
    <property type="status" value="JOINED"/>
    <property type="molecule type" value="Genomic_DNA"/>
</dbReference>
<dbReference type="EMBL" id="M68883">
    <property type="protein sequence ID" value="AAA60995.1"/>
    <property type="status" value="JOINED"/>
    <property type="molecule type" value="Genomic_DNA"/>
</dbReference>
<dbReference type="EMBL" id="M68884">
    <property type="protein sequence ID" value="AAA60995.1"/>
    <property type="status" value="JOINED"/>
    <property type="molecule type" value="Genomic_DNA"/>
</dbReference>
<dbReference type="EMBL" id="M68885">
    <property type="protein sequence ID" value="AAA60995.1"/>
    <property type="status" value="JOINED"/>
    <property type="molecule type" value="Genomic_DNA"/>
</dbReference>
<dbReference type="EMBL" id="AF052126">
    <property type="protein sequence ID" value="AAC28620.1"/>
    <property type="molecule type" value="mRNA"/>
</dbReference>
<dbReference type="EMBL" id="AF113128">
    <property type="protein sequence ID" value="AAF14869.1"/>
    <property type="molecule type" value="mRNA"/>
</dbReference>
<dbReference type="EMBL" id="BT006834">
    <property type="protein sequence ID" value="AAP35480.1"/>
    <property type="molecule type" value="mRNA"/>
</dbReference>
<dbReference type="EMBL" id="AY341029">
    <property type="protein sequence ID" value="AAP88935.1"/>
    <property type="molecule type" value="Genomic_DNA"/>
</dbReference>
<dbReference type="EMBL" id="AK313070">
    <property type="protein sequence ID" value="BAG35898.1"/>
    <property type="molecule type" value="mRNA"/>
</dbReference>
<dbReference type="EMBL" id="CH471102">
    <property type="protein sequence ID" value="EAX08104.1"/>
    <property type="molecule type" value="Genomic_DNA"/>
</dbReference>
<dbReference type="EMBL" id="BC007033">
    <property type="protein sequence ID" value="AAH07033.1"/>
    <property type="molecule type" value="mRNA"/>
</dbReference>
<dbReference type="EMBL" id="BC008673">
    <property type="protein sequence ID" value="AAH08673.1"/>
    <property type="molecule type" value="mRNA"/>
</dbReference>
<dbReference type="EMBL" id="AF073301">
    <property type="protein sequence ID" value="AAC26862.1"/>
    <property type="molecule type" value="Genomic_DNA"/>
</dbReference>
<dbReference type="EMBL" id="AF073302">
    <property type="protein sequence ID" value="AAC26863.1"/>
    <property type="molecule type" value="Genomic_DNA"/>
</dbReference>
<dbReference type="EMBL" id="AF073303">
    <property type="protein sequence ID" value="AAC26864.1"/>
    <property type="molecule type" value="Genomic_DNA"/>
</dbReference>
<dbReference type="EMBL" id="AF073304">
    <property type="protein sequence ID" value="AAC26865.1"/>
    <property type="molecule type" value="Genomic_DNA"/>
</dbReference>
<dbReference type="CCDS" id="CCDS3870.1"/>
<dbReference type="PIR" id="A55274">
    <property type="entry name" value="A55274"/>
</dbReference>
<dbReference type="RefSeq" id="NP_001038.1">
    <property type="nucleotide sequence ID" value="NM_001047.4"/>
</dbReference>
<dbReference type="RefSeq" id="NP_001311251.1">
    <property type="nucleotide sequence ID" value="NM_001324322.1"/>
</dbReference>
<dbReference type="RefSeq" id="NP_001311252.1">
    <property type="nucleotide sequence ID" value="NM_001324323.1"/>
</dbReference>
<dbReference type="SMR" id="P18405"/>
<dbReference type="BioGRID" id="112593">
    <property type="interactions" value="18"/>
</dbReference>
<dbReference type="FunCoup" id="P18405">
    <property type="interactions" value="322"/>
</dbReference>
<dbReference type="IntAct" id="P18405">
    <property type="interactions" value="2"/>
</dbReference>
<dbReference type="STRING" id="9606.ENSP00000274192"/>
<dbReference type="BindingDB" id="P18405"/>
<dbReference type="ChEMBL" id="CHEMBL1787"/>
<dbReference type="DrugBank" id="DB00548">
    <property type="generic name" value="Azelaic acid"/>
</dbReference>
<dbReference type="DrugBank" id="DB01126">
    <property type="generic name" value="Dutasteride"/>
</dbReference>
<dbReference type="DrugBank" id="DB01216">
    <property type="generic name" value="Finasteride"/>
</dbReference>
<dbReference type="DrugBank" id="DB00367">
    <property type="generic name" value="Levonorgestrel"/>
</dbReference>
<dbReference type="DrugBank" id="DB00717">
    <property type="generic name" value="Norethisterone"/>
</dbReference>
<dbReference type="DrugBank" id="DB09389">
    <property type="generic name" value="Norgestrel"/>
</dbReference>
<dbReference type="DrugBank" id="DB06412">
    <property type="generic name" value="Oxymetholone"/>
</dbReference>
<dbReference type="DrugBank" id="DB13943">
    <property type="generic name" value="Testosterone cypionate"/>
</dbReference>
<dbReference type="DrugBank" id="DB13944">
    <property type="generic name" value="Testosterone enanthate"/>
</dbReference>
<dbReference type="DrugBank" id="DB01420">
    <property type="generic name" value="Testosterone propionate"/>
</dbReference>
<dbReference type="DrugBank" id="DB13946">
    <property type="generic name" value="Testosterone undecanoate"/>
</dbReference>
<dbReference type="DrugCentral" id="P18405"/>
<dbReference type="SwissLipids" id="SLP:000001636"/>
<dbReference type="GlyGen" id="P18405">
    <property type="glycosylation" value="1 site"/>
</dbReference>
<dbReference type="iPTMnet" id="P18405"/>
<dbReference type="PhosphoSitePlus" id="P18405"/>
<dbReference type="BioMuta" id="SRD5A1"/>
<dbReference type="DMDM" id="134151"/>
<dbReference type="MassIVE" id="P18405"/>
<dbReference type="PaxDb" id="9606-ENSP00000274192"/>
<dbReference type="PeptideAtlas" id="P18405"/>
<dbReference type="ProteomicsDB" id="53557"/>
<dbReference type="Antibodypedia" id="22401">
    <property type="antibodies" value="180 antibodies from 32 providers"/>
</dbReference>
<dbReference type="DNASU" id="6715"/>
<dbReference type="Ensembl" id="ENST00000274192.7">
    <property type="protein sequence ID" value="ENSP00000274192.5"/>
    <property type="gene ID" value="ENSG00000145545.13"/>
</dbReference>
<dbReference type="GeneID" id="6715"/>
<dbReference type="KEGG" id="hsa:6715"/>
<dbReference type="MANE-Select" id="ENST00000274192.7">
    <property type="protein sequence ID" value="ENSP00000274192.5"/>
    <property type="RefSeq nucleotide sequence ID" value="NM_001047.4"/>
    <property type="RefSeq protein sequence ID" value="NP_001038.1"/>
</dbReference>
<dbReference type="UCSC" id="uc003jdw.4">
    <property type="organism name" value="human"/>
</dbReference>
<dbReference type="AGR" id="HGNC:11284"/>
<dbReference type="CTD" id="6715"/>
<dbReference type="DisGeNET" id="6715"/>
<dbReference type="GeneCards" id="SRD5A1"/>
<dbReference type="HGNC" id="HGNC:11284">
    <property type="gene designation" value="SRD5A1"/>
</dbReference>
<dbReference type="HPA" id="ENSG00000145545">
    <property type="expression patterns" value="Tissue enhanced (liver)"/>
</dbReference>
<dbReference type="MIM" id="184753">
    <property type="type" value="gene"/>
</dbReference>
<dbReference type="neXtProt" id="NX_P18405"/>
<dbReference type="OpenTargets" id="ENSG00000145545"/>
<dbReference type="PharmGKB" id="PA36112"/>
<dbReference type="VEuPathDB" id="HostDB:ENSG00000145545"/>
<dbReference type="eggNOG" id="KOG1638">
    <property type="taxonomic scope" value="Eukaryota"/>
</dbReference>
<dbReference type="GeneTree" id="ENSGT00950000182886"/>
<dbReference type="HOGENOM" id="CLU_065395_1_1_1"/>
<dbReference type="InParanoid" id="P18405"/>
<dbReference type="OMA" id="MFCVYNG"/>
<dbReference type="OrthoDB" id="5788137at2759"/>
<dbReference type="PAN-GO" id="P18405">
    <property type="GO annotations" value="2 GO annotations based on evolutionary models"/>
</dbReference>
<dbReference type="PhylomeDB" id="P18405"/>
<dbReference type="TreeFam" id="TF314668"/>
<dbReference type="BioCyc" id="MetaCyc:HS07261-MONOMER"/>
<dbReference type="BRENDA" id="1.3.1.22">
    <property type="organism ID" value="2681"/>
</dbReference>
<dbReference type="BRENDA" id="1.3.99.5">
    <property type="organism ID" value="2681"/>
</dbReference>
<dbReference type="PathwayCommons" id="P18405"/>
<dbReference type="Reactome" id="R-HSA-193048">
    <property type="pathway name" value="Androgen biosynthesis"/>
</dbReference>
<dbReference type="SignaLink" id="P18405"/>
<dbReference type="SIGNOR" id="P18405"/>
<dbReference type="BioGRID-ORCS" id="6715">
    <property type="hits" value="10 hits in 1151 CRISPR screens"/>
</dbReference>
<dbReference type="GeneWiki" id="SRD5A1"/>
<dbReference type="GenomeRNAi" id="6715"/>
<dbReference type="Pharos" id="P18405">
    <property type="development level" value="Tclin"/>
</dbReference>
<dbReference type="PRO" id="PR:P18405"/>
<dbReference type="Proteomes" id="UP000005640">
    <property type="component" value="Chromosome 5"/>
</dbReference>
<dbReference type="RNAct" id="P18405">
    <property type="molecule type" value="protein"/>
</dbReference>
<dbReference type="Bgee" id="ENSG00000145545">
    <property type="expression patterns" value="Expressed in esophagus squamous epithelium and 177 other cell types or tissues"/>
</dbReference>
<dbReference type="ExpressionAtlas" id="P18405">
    <property type="expression patterns" value="baseline and differential"/>
</dbReference>
<dbReference type="GO" id="GO:0070852">
    <property type="term" value="C:cell body fiber"/>
    <property type="evidence" value="ECO:0007669"/>
    <property type="project" value="Ensembl"/>
</dbReference>
<dbReference type="GO" id="GO:0005789">
    <property type="term" value="C:endoplasmic reticulum membrane"/>
    <property type="evidence" value="ECO:0000304"/>
    <property type="project" value="Reactome"/>
</dbReference>
<dbReference type="GO" id="GO:0043025">
    <property type="term" value="C:neuronal cell body"/>
    <property type="evidence" value="ECO:0007669"/>
    <property type="project" value="Ensembl"/>
</dbReference>
<dbReference type="GO" id="GO:0048471">
    <property type="term" value="C:perinuclear region of cytoplasm"/>
    <property type="evidence" value="ECO:0007669"/>
    <property type="project" value="Ensembl"/>
</dbReference>
<dbReference type="GO" id="GO:0047751">
    <property type="term" value="F:3-oxo-5-alpha-steroid 4-dehydrogenase (NADP+) activity"/>
    <property type="evidence" value="ECO:0007669"/>
    <property type="project" value="UniProtKB-EC"/>
</dbReference>
<dbReference type="GO" id="GO:0003865">
    <property type="term" value="F:3-oxo-5-alpha-steroid 4-dehydrogenase activity"/>
    <property type="evidence" value="ECO:0000314"/>
    <property type="project" value="UniProtKB"/>
</dbReference>
<dbReference type="GO" id="GO:0033218">
    <property type="term" value="F:amide binding"/>
    <property type="evidence" value="ECO:0007669"/>
    <property type="project" value="Ensembl"/>
</dbReference>
<dbReference type="GO" id="GO:0009055">
    <property type="term" value="F:electron transfer activity"/>
    <property type="evidence" value="ECO:0000304"/>
    <property type="project" value="UniProtKB"/>
</dbReference>
<dbReference type="GO" id="GO:0070402">
    <property type="term" value="F:NADPH binding"/>
    <property type="evidence" value="ECO:0007669"/>
    <property type="project" value="Ensembl"/>
</dbReference>
<dbReference type="GO" id="GO:0006702">
    <property type="term" value="P:androgen biosynthetic process"/>
    <property type="evidence" value="ECO:0000304"/>
    <property type="project" value="Reactome"/>
</dbReference>
<dbReference type="GO" id="GO:0006710">
    <property type="term" value="P:androgen catabolic process"/>
    <property type="evidence" value="ECO:0007669"/>
    <property type="project" value="Ensembl"/>
</dbReference>
<dbReference type="GO" id="GO:0060348">
    <property type="term" value="P:bone development"/>
    <property type="evidence" value="ECO:0007669"/>
    <property type="project" value="Ensembl"/>
</dbReference>
<dbReference type="GO" id="GO:0030154">
    <property type="term" value="P:cell differentiation"/>
    <property type="evidence" value="ECO:0007669"/>
    <property type="project" value="UniProtKB-KW"/>
</dbReference>
<dbReference type="GO" id="GO:0071320">
    <property type="term" value="P:cellular response to cAMP"/>
    <property type="evidence" value="ECO:0007669"/>
    <property type="project" value="Ensembl"/>
</dbReference>
<dbReference type="GO" id="GO:0071549">
    <property type="term" value="P:cellular response to dexamethasone stimulus"/>
    <property type="evidence" value="ECO:0007669"/>
    <property type="project" value="Ensembl"/>
</dbReference>
<dbReference type="GO" id="GO:0071872">
    <property type="term" value="P:cellular response to epinephrine stimulus"/>
    <property type="evidence" value="ECO:0007669"/>
    <property type="project" value="Ensembl"/>
</dbReference>
<dbReference type="GO" id="GO:0071392">
    <property type="term" value="P:cellular response to estradiol stimulus"/>
    <property type="evidence" value="ECO:0007669"/>
    <property type="project" value="Ensembl"/>
</dbReference>
<dbReference type="GO" id="GO:0071363">
    <property type="term" value="P:cellular response to growth factor stimulus"/>
    <property type="evidence" value="ECO:0007669"/>
    <property type="project" value="Ensembl"/>
</dbReference>
<dbReference type="GO" id="GO:0032869">
    <property type="term" value="P:cellular response to insulin stimulus"/>
    <property type="evidence" value="ECO:0007669"/>
    <property type="project" value="Ensembl"/>
</dbReference>
<dbReference type="GO" id="GO:0009267">
    <property type="term" value="P:cellular response to starvation"/>
    <property type="evidence" value="ECO:0007669"/>
    <property type="project" value="Ensembl"/>
</dbReference>
<dbReference type="GO" id="GO:0071394">
    <property type="term" value="P:cellular response to testosterone stimulus"/>
    <property type="evidence" value="ECO:0007669"/>
    <property type="project" value="Ensembl"/>
</dbReference>
<dbReference type="GO" id="GO:0021987">
    <property type="term" value="P:cerebral cortex development"/>
    <property type="evidence" value="ECO:0007669"/>
    <property type="project" value="Ensembl"/>
</dbReference>
<dbReference type="GO" id="GO:0016101">
    <property type="term" value="P:diterpenoid metabolic process"/>
    <property type="evidence" value="ECO:0007669"/>
    <property type="project" value="Ensembl"/>
</dbReference>
<dbReference type="GO" id="GO:0030540">
    <property type="term" value="P:female genitalia development"/>
    <property type="evidence" value="ECO:0007669"/>
    <property type="project" value="Ensembl"/>
</dbReference>
<dbReference type="GO" id="GO:0021766">
    <property type="term" value="P:hippocampus development"/>
    <property type="evidence" value="ECO:0007669"/>
    <property type="project" value="Ensembl"/>
</dbReference>
<dbReference type="GO" id="GO:0021854">
    <property type="term" value="P:hypothalamus development"/>
    <property type="evidence" value="ECO:0007669"/>
    <property type="project" value="Ensembl"/>
</dbReference>
<dbReference type="GO" id="GO:0001889">
    <property type="term" value="P:liver development"/>
    <property type="evidence" value="ECO:0007669"/>
    <property type="project" value="Ensembl"/>
</dbReference>
<dbReference type="GO" id="GO:0030539">
    <property type="term" value="P:male genitalia development"/>
    <property type="evidence" value="ECO:0007669"/>
    <property type="project" value="Ensembl"/>
</dbReference>
<dbReference type="GO" id="GO:0008584">
    <property type="term" value="P:male gonad development"/>
    <property type="evidence" value="ECO:0007669"/>
    <property type="project" value="Ensembl"/>
</dbReference>
<dbReference type="GO" id="GO:0021983">
    <property type="term" value="P:pituitary gland development"/>
    <property type="evidence" value="ECO:0007669"/>
    <property type="project" value="Ensembl"/>
</dbReference>
<dbReference type="GO" id="GO:0042448">
    <property type="term" value="P:progesterone metabolic process"/>
    <property type="evidence" value="ECO:0007669"/>
    <property type="project" value="Ensembl"/>
</dbReference>
<dbReference type="GO" id="GO:0043627">
    <property type="term" value="P:response to estrogen"/>
    <property type="evidence" value="ECO:0007669"/>
    <property type="project" value="Ensembl"/>
</dbReference>
<dbReference type="GO" id="GO:0032354">
    <property type="term" value="P:response to follicle-stimulating hormone"/>
    <property type="evidence" value="ECO:0007669"/>
    <property type="project" value="Ensembl"/>
</dbReference>
<dbReference type="GO" id="GO:0060992">
    <property type="term" value="P:response to fungicide"/>
    <property type="evidence" value="ECO:0007669"/>
    <property type="project" value="Ensembl"/>
</dbReference>
<dbReference type="GO" id="GO:0060416">
    <property type="term" value="P:response to growth hormone"/>
    <property type="evidence" value="ECO:0007669"/>
    <property type="project" value="Ensembl"/>
</dbReference>
<dbReference type="GO" id="GO:0014850">
    <property type="term" value="P:response to muscle activity"/>
    <property type="evidence" value="ECO:0007669"/>
    <property type="project" value="Ensembl"/>
</dbReference>
<dbReference type="GO" id="GO:0009410">
    <property type="term" value="P:response to xenobiotic stimulus"/>
    <property type="evidence" value="ECO:0007669"/>
    <property type="project" value="Ensembl"/>
</dbReference>
<dbReference type="GO" id="GO:0042428">
    <property type="term" value="P:serotonin metabolic process"/>
    <property type="evidence" value="ECO:0007669"/>
    <property type="project" value="Ensembl"/>
</dbReference>
<dbReference type="GO" id="GO:0007530">
    <property type="term" value="P:sex determination"/>
    <property type="evidence" value="ECO:0000303"/>
    <property type="project" value="ProtInc"/>
</dbReference>
<dbReference type="GO" id="GO:0021510">
    <property type="term" value="P:spinal cord development"/>
    <property type="evidence" value="ECO:0007669"/>
    <property type="project" value="Ensembl"/>
</dbReference>
<dbReference type="GO" id="GO:0006694">
    <property type="term" value="P:steroid biosynthetic process"/>
    <property type="evidence" value="ECO:0000318"/>
    <property type="project" value="GO_Central"/>
</dbReference>
<dbReference type="GO" id="GO:0021794">
    <property type="term" value="P:thalamus development"/>
    <property type="evidence" value="ECO:0007669"/>
    <property type="project" value="Ensembl"/>
</dbReference>
<dbReference type="GO" id="GO:0001655">
    <property type="term" value="P:urogenital system development"/>
    <property type="evidence" value="ECO:0007669"/>
    <property type="project" value="Ensembl"/>
</dbReference>
<dbReference type="FunFam" id="1.20.120.1630:FF:000002">
    <property type="entry name" value="Steroid 5 alpha-reductase 1"/>
    <property type="match status" value="1"/>
</dbReference>
<dbReference type="Gene3D" id="1.20.120.1630">
    <property type="match status" value="1"/>
</dbReference>
<dbReference type="InterPro" id="IPR016636">
    <property type="entry name" value="3-oxo-5-alpha-steroid_4-DH"/>
</dbReference>
<dbReference type="InterPro" id="IPR001104">
    <property type="entry name" value="3-oxo-5_a-steroid_4-DH_C"/>
</dbReference>
<dbReference type="InterPro" id="IPR039357">
    <property type="entry name" value="SRD5A/TECR"/>
</dbReference>
<dbReference type="PANTHER" id="PTHR10556">
    <property type="entry name" value="3-OXO-5-ALPHA-STEROID 4-DEHYDROGENASE"/>
    <property type="match status" value="1"/>
</dbReference>
<dbReference type="PANTHER" id="PTHR10556:SF57">
    <property type="entry name" value="3-OXO-5-ALPHA-STEROID 4-DEHYDROGENASE 1"/>
    <property type="match status" value="1"/>
</dbReference>
<dbReference type="Pfam" id="PF02544">
    <property type="entry name" value="Steroid_dh"/>
    <property type="match status" value="1"/>
</dbReference>
<dbReference type="PIRSF" id="PIRSF015596">
    <property type="entry name" value="5_alpha-SR2"/>
    <property type="match status" value="1"/>
</dbReference>
<dbReference type="PROSITE" id="PS50244">
    <property type="entry name" value="S5A_REDUCTASE"/>
    <property type="match status" value="1"/>
</dbReference>